<sequence>MIEVFLFGIVLGLIPITLAGLFVTAYLQYRRGDQLDL</sequence>
<gene>
    <name evidence="1" type="primary">petG</name>
</gene>
<reference key="1">
    <citation type="journal article" date="2004" name="Gene">
        <title>The complete nucleotide sequence of wild rice (Oryza nivara) chloroplast genome: first genome wide comparative sequence analysis of wild and cultivated rice.</title>
        <authorList>
            <person name="Masood M.S."/>
            <person name="Nishikawa T."/>
            <person name="Fukuoka S."/>
            <person name="Njenga P.K."/>
            <person name="Tsudzuki T."/>
            <person name="Kadowaki K."/>
        </authorList>
    </citation>
    <scope>NUCLEOTIDE SEQUENCE [LARGE SCALE GENOMIC DNA]</scope>
    <source>
        <strain evidence="2">cv. SL10</strain>
    </source>
</reference>
<proteinExistence type="inferred from homology"/>
<dbReference type="EMBL" id="AP006728">
    <property type="protein sequence ID" value="BAD26798.1"/>
    <property type="molecule type" value="Genomic_DNA"/>
</dbReference>
<dbReference type="RefSeq" id="YP_052769.1">
    <property type="nucleotide sequence ID" value="NC_005973.1"/>
</dbReference>
<dbReference type="SMR" id="Q6ENF4"/>
<dbReference type="STRING" id="4536.Q6ENF4"/>
<dbReference type="GeneID" id="2885881"/>
<dbReference type="Proteomes" id="UP000006591">
    <property type="component" value="Chloroplast"/>
</dbReference>
<dbReference type="GO" id="GO:0009535">
    <property type="term" value="C:chloroplast thylakoid membrane"/>
    <property type="evidence" value="ECO:0007669"/>
    <property type="project" value="UniProtKB-SubCell"/>
</dbReference>
<dbReference type="GO" id="GO:0009512">
    <property type="term" value="C:cytochrome b6f complex"/>
    <property type="evidence" value="ECO:0007669"/>
    <property type="project" value="InterPro"/>
</dbReference>
<dbReference type="GO" id="GO:0009536">
    <property type="term" value="C:plastid"/>
    <property type="evidence" value="ECO:0000305"/>
    <property type="project" value="Gramene"/>
</dbReference>
<dbReference type="GO" id="GO:0045158">
    <property type="term" value="F:electron transporter, transferring electrons within cytochrome b6/f complex of photosystem II activity"/>
    <property type="evidence" value="ECO:0007669"/>
    <property type="project" value="UniProtKB-UniRule"/>
</dbReference>
<dbReference type="GO" id="GO:0017004">
    <property type="term" value="P:cytochrome complex assembly"/>
    <property type="evidence" value="ECO:0007669"/>
    <property type="project" value="UniProtKB-UniRule"/>
</dbReference>
<dbReference type="GO" id="GO:0015979">
    <property type="term" value="P:photosynthesis"/>
    <property type="evidence" value="ECO:0007669"/>
    <property type="project" value="UniProtKB-KW"/>
</dbReference>
<dbReference type="HAMAP" id="MF_00432">
    <property type="entry name" value="Cytb6_f_PetG"/>
    <property type="match status" value="1"/>
</dbReference>
<dbReference type="InterPro" id="IPR003683">
    <property type="entry name" value="Cyt_6/f_cplx_su5"/>
</dbReference>
<dbReference type="InterPro" id="IPR036099">
    <property type="entry name" value="Cyt_6/f_cplx_su5_sf"/>
</dbReference>
<dbReference type="NCBIfam" id="NF001907">
    <property type="entry name" value="PRK00665.1"/>
    <property type="match status" value="1"/>
</dbReference>
<dbReference type="Pfam" id="PF02529">
    <property type="entry name" value="PetG"/>
    <property type="match status" value="1"/>
</dbReference>
<dbReference type="PIRSF" id="PIRSF000034">
    <property type="entry name" value="Cyt_b6-f_V"/>
    <property type="match status" value="1"/>
</dbReference>
<dbReference type="SUPFAM" id="SSF103446">
    <property type="entry name" value="PetG subunit of the cytochrome b6f complex"/>
    <property type="match status" value="1"/>
</dbReference>
<comment type="function">
    <text evidence="1">Component of the cytochrome b6-f complex, which mediates electron transfer between photosystem II (PSII) and photosystem I (PSI), cyclic electron flow around PSI, and state transitions. PetG is required for either the stability or assembly of the cytochrome b6-f complex.</text>
</comment>
<comment type="subunit">
    <text evidence="1">The 4 large subunits of the cytochrome b6-f complex are cytochrome b6, subunit IV (17 kDa polypeptide, PetD), cytochrome f and the Rieske protein, while the 4 small subunits are PetG, PetL, PetM and PetN. The complex functions as a dimer.</text>
</comment>
<comment type="subcellular location">
    <subcellularLocation>
        <location evidence="1">Plastid</location>
        <location evidence="1">Chloroplast thylakoid membrane</location>
        <topology evidence="1">Single-pass membrane protein</topology>
    </subcellularLocation>
</comment>
<comment type="similarity">
    <text evidence="1">Belongs to the PetG family.</text>
</comment>
<keyword id="KW-0150">Chloroplast</keyword>
<keyword id="KW-0249">Electron transport</keyword>
<keyword id="KW-0472">Membrane</keyword>
<keyword id="KW-0602">Photosynthesis</keyword>
<keyword id="KW-0934">Plastid</keyword>
<keyword id="KW-1185">Reference proteome</keyword>
<keyword id="KW-0793">Thylakoid</keyword>
<keyword id="KW-0812">Transmembrane</keyword>
<keyword id="KW-1133">Transmembrane helix</keyword>
<keyword id="KW-0813">Transport</keyword>
<organism>
    <name type="scientific">Oryza nivara</name>
    <name type="common">Indian wild rice</name>
    <name type="synonym">Oryza sativa f. spontanea</name>
    <dbReference type="NCBI Taxonomy" id="4536"/>
    <lineage>
        <taxon>Eukaryota</taxon>
        <taxon>Viridiplantae</taxon>
        <taxon>Streptophyta</taxon>
        <taxon>Embryophyta</taxon>
        <taxon>Tracheophyta</taxon>
        <taxon>Spermatophyta</taxon>
        <taxon>Magnoliopsida</taxon>
        <taxon>Liliopsida</taxon>
        <taxon>Poales</taxon>
        <taxon>Poaceae</taxon>
        <taxon>BOP clade</taxon>
        <taxon>Oryzoideae</taxon>
        <taxon>Oryzeae</taxon>
        <taxon>Oryzinae</taxon>
        <taxon>Oryza</taxon>
    </lineage>
</organism>
<accession>Q6ENF4</accession>
<protein>
    <recommendedName>
        <fullName evidence="1">Cytochrome b6-f complex subunit 5</fullName>
    </recommendedName>
    <alternativeName>
        <fullName evidence="1">Cytochrome b6-f complex subunit PetG</fullName>
    </alternativeName>
    <alternativeName>
        <fullName evidence="1">Cytochrome b6-f complex subunit V</fullName>
    </alternativeName>
</protein>
<name>PETG_ORYNI</name>
<evidence type="ECO:0000255" key="1">
    <source>
        <dbReference type="HAMAP-Rule" id="MF_00432"/>
    </source>
</evidence>
<evidence type="ECO:0000312" key="2">
    <source>
        <dbReference type="Proteomes" id="UP000006591"/>
    </source>
</evidence>
<geneLocation type="chloroplast"/>
<feature type="chain" id="PRO_0000216394" description="Cytochrome b6-f complex subunit 5">
    <location>
        <begin position="1"/>
        <end position="37"/>
    </location>
</feature>
<feature type="transmembrane region" description="Helical" evidence="1">
    <location>
        <begin position="5"/>
        <end position="25"/>
    </location>
</feature>